<comment type="function">
    <text evidence="1 3">Transcriptional regulator (By similarity). Binds to the right arm of the replication origin oriC of the chromosome (PubMed:8449900). Rob binding may influence the formation of the nucleoprotein structure, required for oriC function in the initiation of replication (PubMed:8449900).</text>
</comment>
<gene>
    <name type="primary">rob</name>
    <name type="ordered locus">b4396</name>
    <name type="ordered locus">JW4359</name>
</gene>
<organism>
    <name type="scientific">Escherichia coli (strain K12)</name>
    <dbReference type="NCBI Taxonomy" id="83333"/>
    <lineage>
        <taxon>Bacteria</taxon>
        <taxon>Pseudomonadati</taxon>
        <taxon>Pseudomonadota</taxon>
        <taxon>Gammaproteobacteria</taxon>
        <taxon>Enterobacterales</taxon>
        <taxon>Enterobacteriaceae</taxon>
        <taxon>Escherichia</taxon>
    </lineage>
</organism>
<feature type="chain" id="PRO_0000194578" description="Right origin-binding protein">
    <location>
        <begin position="1"/>
        <end position="289"/>
    </location>
</feature>
<feature type="domain" description="HTH araC/xylS-type" evidence="2">
    <location>
        <begin position="8"/>
        <end position="106"/>
    </location>
</feature>
<feature type="DNA-binding region" description="H-T-H motif" evidence="2">
    <location>
        <begin position="25"/>
        <end position="46"/>
    </location>
</feature>
<feature type="DNA-binding region" description="H-T-H motif" evidence="2">
    <location>
        <begin position="73"/>
        <end position="96"/>
    </location>
</feature>
<feature type="helix" evidence="4">
    <location>
        <begin position="4"/>
        <end position="15"/>
    </location>
</feature>
<feature type="strand" evidence="4">
    <location>
        <begin position="18"/>
        <end position="21"/>
    </location>
</feature>
<feature type="helix" evidence="4">
    <location>
        <begin position="25"/>
        <end position="28"/>
    </location>
</feature>
<feature type="turn" evidence="4">
    <location>
        <begin position="29"/>
        <end position="31"/>
    </location>
</feature>
<feature type="helix" evidence="4">
    <location>
        <begin position="35"/>
        <end position="46"/>
    </location>
</feature>
<feature type="helix" evidence="4">
    <location>
        <begin position="50"/>
        <end position="68"/>
    </location>
</feature>
<feature type="helix" evidence="4">
    <location>
        <begin position="73"/>
        <end position="79"/>
    </location>
</feature>
<feature type="helix" evidence="4">
    <location>
        <begin position="85"/>
        <end position="96"/>
    </location>
</feature>
<feature type="helix" evidence="4">
    <location>
        <begin position="100"/>
        <end position="105"/>
    </location>
</feature>
<feature type="strand" evidence="4">
    <location>
        <begin position="107"/>
        <end position="110"/>
    </location>
</feature>
<feature type="strand" evidence="4">
    <location>
        <begin position="128"/>
        <end position="133"/>
    </location>
</feature>
<feature type="strand" evidence="4">
    <location>
        <begin position="136"/>
        <end position="144"/>
    </location>
</feature>
<feature type="helix" evidence="4">
    <location>
        <begin position="149"/>
        <end position="151"/>
    </location>
</feature>
<feature type="helix" evidence="4">
    <location>
        <begin position="152"/>
        <end position="170"/>
    </location>
</feature>
<feature type="strand" evidence="4">
    <location>
        <begin position="178"/>
        <end position="186"/>
    </location>
</feature>
<feature type="strand" evidence="4">
    <location>
        <begin position="188"/>
        <end position="190"/>
    </location>
</feature>
<feature type="strand" evidence="4">
    <location>
        <begin position="194"/>
        <end position="203"/>
    </location>
</feature>
<feature type="helix" evidence="4">
    <location>
        <begin position="204"/>
        <end position="207"/>
    </location>
</feature>
<feature type="helix" evidence="4">
    <location>
        <begin position="208"/>
        <end position="210"/>
    </location>
</feature>
<feature type="strand" evidence="4">
    <location>
        <begin position="215"/>
        <end position="219"/>
    </location>
</feature>
<feature type="strand" evidence="4">
    <location>
        <begin position="222"/>
        <end position="232"/>
    </location>
</feature>
<feature type="helix" evidence="4">
    <location>
        <begin position="233"/>
        <end position="235"/>
    </location>
</feature>
<feature type="helix" evidence="4">
    <location>
        <begin position="236"/>
        <end position="245"/>
    </location>
</feature>
<feature type="helix" evidence="4">
    <location>
        <begin position="247"/>
        <end position="250"/>
    </location>
</feature>
<feature type="strand" evidence="4">
    <location>
        <begin position="260"/>
        <end position="264"/>
    </location>
</feature>
<feature type="helix" evidence="4">
    <location>
        <begin position="266"/>
        <end position="268"/>
    </location>
</feature>
<feature type="strand" evidence="4">
    <location>
        <begin position="278"/>
        <end position="288"/>
    </location>
</feature>
<proteinExistence type="evidence at protein level"/>
<reference key="1">
    <citation type="journal article" date="1993" name="J. Biol. Chem.">
        <title>A novel binding protein of the origin of the Escherichia coli chromosome.</title>
        <authorList>
            <person name="Skarstad K."/>
            <person name="Thoeny B."/>
            <person name="Hwang D.S."/>
            <person name="Kornberg A."/>
        </authorList>
    </citation>
    <scope>NUCLEOTIDE SEQUENCE [GENOMIC DNA]</scope>
    <scope>PROTEIN SEQUENCE OF 1-21</scope>
    <scope>FUNCTION</scope>
    <source>
        <strain>K12 / W3110 / ATCC 27325 / DSM 5911</strain>
    </source>
</reference>
<reference key="2">
    <citation type="journal article" date="1995" name="Nucleic Acids Res.">
        <title>Analysis of the Escherichia coli genome VI: DNA sequence of the region from 92.8 through 100 minutes.</title>
        <authorList>
            <person name="Burland V.D."/>
            <person name="Plunkett G. III"/>
            <person name="Sofia H.J."/>
            <person name="Daniels D.L."/>
            <person name="Blattner F.R."/>
        </authorList>
    </citation>
    <scope>NUCLEOTIDE SEQUENCE [LARGE SCALE GENOMIC DNA]</scope>
    <source>
        <strain>K12 / MG1655 / ATCC 47076</strain>
    </source>
</reference>
<reference key="3">
    <citation type="journal article" date="1997" name="Science">
        <title>The complete genome sequence of Escherichia coli K-12.</title>
        <authorList>
            <person name="Blattner F.R."/>
            <person name="Plunkett G. III"/>
            <person name="Bloch C.A."/>
            <person name="Perna N.T."/>
            <person name="Burland V."/>
            <person name="Riley M."/>
            <person name="Collado-Vides J."/>
            <person name="Glasner J.D."/>
            <person name="Rode C.K."/>
            <person name="Mayhew G.F."/>
            <person name="Gregor J."/>
            <person name="Davis N.W."/>
            <person name="Kirkpatrick H.A."/>
            <person name="Goeden M.A."/>
            <person name="Rose D.J."/>
            <person name="Mau B."/>
            <person name="Shao Y."/>
        </authorList>
    </citation>
    <scope>NUCLEOTIDE SEQUENCE [LARGE SCALE GENOMIC DNA]</scope>
    <source>
        <strain>K12 / MG1655 / ATCC 47076</strain>
    </source>
</reference>
<reference key="4">
    <citation type="journal article" date="2006" name="Mol. Syst. Biol.">
        <title>Highly accurate genome sequences of Escherichia coli K-12 strains MG1655 and W3110.</title>
        <authorList>
            <person name="Hayashi K."/>
            <person name="Morooka N."/>
            <person name="Yamamoto Y."/>
            <person name="Fujita K."/>
            <person name="Isono K."/>
            <person name="Choi S."/>
            <person name="Ohtsubo E."/>
            <person name="Baba T."/>
            <person name="Wanner B.L."/>
            <person name="Mori H."/>
            <person name="Horiuchi T."/>
        </authorList>
    </citation>
    <scope>NUCLEOTIDE SEQUENCE [LARGE SCALE GENOMIC DNA]</scope>
    <source>
        <strain>K12 / W3110 / ATCC 27325 / DSM 5911</strain>
    </source>
</reference>
<dbReference type="EMBL" id="M97495">
    <property type="protein sequence ID" value="AAA24569.1"/>
    <property type="molecule type" value="Genomic_DNA"/>
</dbReference>
<dbReference type="EMBL" id="U14003">
    <property type="protein sequence ID" value="AAA97292.1"/>
    <property type="molecule type" value="Genomic_DNA"/>
</dbReference>
<dbReference type="EMBL" id="U00096">
    <property type="protein sequence ID" value="AAC77349.1"/>
    <property type="molecule type" value="Genomic_DNA"/>
</dbReference>
<dbReference type="EMBL" id="AP009048">
    <property type="protein sequence ID" value="BAE78385.1"/>
    <property type="molecule type" value="Genomic_DNA"/>
</dbReference>
<dbReference type="PIR" id="JU0158">
    <property type="entry name" value="JU0158"/>
</dbReference>
<dbReference type="RefSeq" id="NP_418813.1">
    <property type="nucleotide sequence ID" value="NC_000913.3"/>
</dbReference>
<dbReference type="PDB" id="1D5Y">
    <property type="method" value="X-ray"/>
    <property type="resolution" value="2.70 A"/>
    <property type="chains" value="A/B/C/D=3-289"/>
</dbReference>
<dbReference type="PDB" id="7VWY">
    <property type="method" value="EM"/>
    <property type="resolution" value="4.57 A"/>
    <property type="chains" value="G=1-289"/>
</dbReference>
<dbReference type="PDB" id="7VWZ">
    <property type="method" value="EM"/>
    <property type="resolution" value="4.00 A"/>
    <property type="chains" value="G/I=1-289"/>
</dbReference>
<dbReference type="PDBsum" id="1D5Y"/>
<dbReference type="PDBsum" id="7VWY"/>
<dbReference type="PDBsum" id="7VWZ"/>
<dbReference type="EMDB" id="EMD-32165"/>
<dbReference type="EMDB" id="EMD-32166"/>
<dbReference type="SMR" id="P0ACI0"/>
<dbReference type="BioGRID" id="4259321">
    <property type="interactions" value="274"/>
</dbReference>
<dbReference type="DIP" id="DIP-47868N"/>
<dbReference type="FunCoup" id="P0ACI0">
    <property type="interactions" value="137"/>
</dbReference>
<dbReference type="IntAct" id="P0ACI0">
    <property type="interactions" value="17"/>
</dbReference>
<dbReference type="STRING" id="511145.b4396"/>
<dbReference type="jPOST" id="P0ACI0"/>
<dbReference type="PaxDb" id="511145-b4396"/>
<dbReference type="EnsemblBacteria" id="AAC77349">
    <property type="protein sequence ID" value="AAC77349"/>
    <property type="gene ID" value="b4396"/>
</dbReference>
<dbReference type="GeneID" id="948916"/>
<dbReference type="KEGG" id="ecj:JW4359"/>
<dbReference type="KEGG" id="eco:b4396"/>
<dbReference type="KEGG" id="ecoc:C3026_23755"/>
<dbReference type="PATRIC" id="fig|1411691.4.peg.2288"/>
<dbReference type="EchoBASE" id="EB1340"/>
<dbReference type="eggNOG" id="COG2207">
    <property type="taxonomic scope" value="Bacteria"/>
</dbReference>
<dbReference type="eggNOG" id="COG3708">
    <property type="taxonomic scope" value="Bacteria"/>
</dbReference>
<dbReference type="HOGENOM" id="CLU_000445_81_1_6"/>
<dbReference type="InParanoid" id="P0ACI0"/>
<dbReference type="OMA" id="WRQYLGE"/>
<dbReference type="OrthoDB" id="282744at2"/>
<dbReference type="PhylomeDB" id="P0ACI0"/>
<dbReference type="BioCyc" id="EcoCyc:PD04418"/>
<dbReference type="EvolutionaryTrace" id="P0ACI0"/>
<dbReference type="PRO" id="PR:P0ACI0"/>
<dbReference type="Proteomes" id="UP000000625">
    <property type="component" value="Chromosome"/>
</dbReference>
<dbReference type="GO" id="GO:0005829">
    <property type="term" value="C:cytosol"/>
    <property type="evidence" value="ECO:0000314"/>
    <property type="project" value="EcoCyc"/>
</dbReference>
<dbReference type="GO" id="GO:0001108">
    <property type="term" value="F:bacterial-type RNA polymerase holo enzyme binding"/>
    <property type="evidence" value="ECO:0000318"/>
    <property type="project" value="GO_Central"/>
</dbReference>
<dbReference type="GO" id="GO:0003700">
    <property type="term" value="F:DNA-binding transcription factor activity"/>
    <property type="evidence" value="ECO:0007669"/>
    <property type="project" value="InterPro"/>
</dbReference>
<dbReference type="GO" id="GO:0043565">
    <property type="term" value="F:sequence-specific DNA binding"/>
    <property type="evidence" value="ECO:0000314"/>
    <property type="project" value="EcoliWiki"/>
</dbReference>
<dbReference type="GO" id="GO:0006355">
    <property type="term" value="P:regulation of DNA-templated transcription"/>
    <property type="evidence" value="ECO:0000318"/>
    <property type="project" value="GO_Central"/>
</dbReference>
<dbReference type="FunFam" id="1.10.10.60:FF:000013">
    <property type="entry name" value="DNA-binding transcriptional activator MarA"/>
    <property type="match status" value="1"/>
</dbReference>
<dbReference type="FunFam" id="1.10.10.60:FF:000030">
    <property type="entry name" value="DNA-binding transcriptional regulator SoxS"/>
    <property type="match status" value="1"/>
</dbReference>
<dbReference type="Gene3D" id="1.10.10.60">
    <property type="entry name" value="Homeodomain-like"/>
    <property type="match status" value="2"/>
</dbReference>
<dbReference type="Gene3D" id="3.20.80.10">
    <property type="entry name" value="Regulatory factor, effector binding domain"/>
    <property type="match status" value="1"/>
</dbReference>
<dbReference type="InterPro" id="IPR010499">
    <property type="entry name" value="AraC_E-bd"/>
</dbReference>
<dbReference type="InterPro" id="IPR029442">
    <property type="entry name" value="GyrI-like"/>
</dbReference>
<dbReference type="InterPro" id="IPR009057">
    <property type="entry name" value="Homeodomain-like_sf"/>
</dbReference>
<dbReference type="InterPro" id="IPR018060">
    <property type="entry name" value="HTH_AraC"/>
</dbReference>
<dbReference type="InterPro" id="IPR018062">
    <property type="entry name" value="HTH_AraC-typ_CS"/>
</dbReference>
<dbReference type="InterPro" id="IPR050959">
    <property type="entry name" value="MarA-like"/>
</dbReference>
<dbReference type="InterPro" id="IPR011256">
    <property type="entry name" value="Reg_factor_effector_dom_sf"/>
</dbReference>
<dbReference type="InterPro" id="IPR020449">
    <property type="entry name" value="Tscrpt_reg_AraC-type_HTH"/>
</dbReference>
<dbReference type="NCBIfam" id="NF011701">
    <property type="entry name" value="PRK15121.1"/>
    <property type="match status" value="1"/>
</dbReference>
<dbReference type="NCBIfam" id="NF012228">
    <property type="entry name" value="RobA_TF"/>
    <property type="match status" value="1"/>
</dbReference>
<dbReference type="PANTHER" id="PTHR47504">
    <property type="entry name" value="RIGHT ORIGIN-BINDING PROTEIN"/>
    <property type="match status" value="1"/>
</dbReference>
<dbReference type="PANTHER" id="PTHR47504:SF5">
    <property type="entry name" value="RIGHT ORIGIN-BINDING PROTEIN"/>
    <property type="match status" value="1"/>
</dbReference>
<dbReference type="Pfam" id="PF06445">
    <property type="entry name" value="GyrI-like"/>
    <property type="match status" value="1"/>
</dbReference>
<dbReference type="Pfam" id="PF12833">
    <property type="entry name" value="HTH_18"/>
    <property type="match status" value="1"/>
</dbReference>
<dbReference type="PRINTS" id="PR00032">
    <property type="entry name" value="HTHARAC"/>
</dbReference>
<dbReference type="SMART" id="SM00871">
    <property type="entry name" value="AraC_E_bind"/>
    <property type="match status" value="1"/>
</dbReference>
<dbReference type="SMART" id="SM00342">
    <property type="entry name" value="HTH_ARAC"/>
    <property type="match status" value="1"/>
</dbReference>
<dbReference type="SUPFAM" id="SSF46689">
    <property type="entry name" value="Homeodomain-like"/>
    <property type="match status" value="2"/>
</dbReference>
<dbReference type="SUPFAM" id="SSF55136">
    <property type="entry name" value="Probable bacterial effector-binding domain"/>
    <property type="match status" value="1"/>
</dbReference>
<dbReference type="PROSITE" id="PS00041">
    <property type="entry name" value="HTH_ARAC_FAMILY_1"/>
    <property type="match status" value="1"/>
</dbReference>
<dbReference type="PROSITE" id="PS01124">
    <property type="entry name" value="HTH_ARAC_FAMILY_2"/>
    <property type="match status" value="1"/>
</dbReference>
<accession>P0ACI0</accession>
<accession>P27292</accession>
<accession>Q2M5S1</accession>
<evidence type="ECO:0000250" key="1">
    <source>
        <dbReference type="UniProtKB" id="Q8ZJU7"/>
    </source>
</evidence>
<evidence type="ECO:0000255" key="2">
    <source>
        <dbReference type="PROSITE-ProRule" id="PRU00593"/>
    </source>
</evidence>
<evidence type="ECO:0000269" key="3">
    <source>
    </source>
</evidence>
<evidence type="ECO:0007829" key="4">
    <source>
        <dbReference type="PDB" id="1D5Y"/>
    </source>
</evidence>
<protein>
    <recommendedName>
        <fullName>Right origin-binding protein</fullName>
    </recommendedName>
</protein>
<keyword id="KW-0002">3D-structure</keyword>
<keyword id="KW-0903">Direct protein sequencing</keyword>
<keyword id="KW-0238">DNA-binding</keyword>
<keyword id="KW-1185">Reference proteome</keyword>
<keyword id="KW-0804">Transcription</keyword>
<keyword id="KW-0805">Transcription regulation</keyword>
<name>ROB_ECOLI</name>
<sequence length="289" mass="33145">MDQAGIIRDLLIWLEGHLDQPLSLDNVAAKAGYSKWHLQRMFKDVTGHAIGAYIRARRLSKSAVALRLTARPILDIALQYRFDSQQTFTRAFKKQFAQTPALYRRSPEWSAFGIRPPLRLGEFTMPEHKFVTLEDTPLIGVTQSYSCSLEQISDFRHEMRYQFWHDFLGNAPTIPPVLYGLNETRPSQDKDDEQEVFYTTALAQDQADGYVLTGHPVMLQGGEYVMFTYEGLGTGVQEFILTVYGTCMPMLNLTRRKGQDIERYYPAEDAKAGDRPINLRCELLIPIRR</sequence>